<dbReference type="EC" id="2.3.1.181" evidence="1"/>
<dbReference type="EMBL" id="BA000019">
    <property type="protein sequence ID" value="BAB74884.1"/>
    <property type="molecule type" value="Genomic_DNA"/>
</dbReference>
<dbReference type="PIR" id="AB2204">
    <property type="entry name" value="AB2204"/>
</dbReference>
<dbReference type="RefSeq" id="WP_010997336.1">
    <property type="nucleotide sequence ID" value="NZ_RSCN01000001.1"/>
</dbReference>
<dbReference type="SMR" id="Q8YSA4"/>
<dbReference type="STRING" id="103690.gene:10495222"/>
<dbReference type="KEGG" id="ana:alr3185"/>
<dbReference type="eggNOG" id="COG0321">
    <property type="taxonomic scope" value="Bacteria"/>
</dbReference>
<dbReference type="OrthoDB" id="9787061at2"/>
<dbReference type="UniPathway" id="UPA00538">
    <property type="reaction ID" value="UER00592"/>
</dbReference>
<dbReference type="Proteomes" id="UP000002483">
    <property type="component" value="Chromosome"/>
</dbReference>
<dbReference type="GO" id="GO:0005737">
    <property type="term" value="C:cytoplasm"/>
    <property type="evidence" value="ECO:0007669"/>
    <property type="project" value="UniProtKB-SubCell"/>
</dbReference>
<dbReference type="GO" id="GO:0033819">
    <property type="term" value="F:lipoyl(octanoyl) transferase activity"/>
    <property type="evidence" value="ECO:0007669"/>
    <property type="project" value="UniProtKB-EC"/>
</dbReference>
<dbReference type="GO" id="GO:0036211">
    <property type="term" value="P:protein modification process"/>
    <property type="evidence" value="ECO:0007669"/>
    <property type="project" value="InterPro"/>
</dbReference>
<dbReference type="CDD" id="cd16444">
    <property type="entry name" value="LipB"/>
    <property type="match status" value="1"/>
</dbReference>
<dbReference type="FunFam" id="3.30.930.10:FF:000035">
    <property type="entry name" value="Putative lipoyltransferase 2, mitochondrial"/>
    <property type="match status" value="1"/>
</dbReference>
<dbReference type="Gene3D" id="3.30.930.10">
    <property type="entry name" value="Bira Bifunctional Protein, Domain 2"/>
    <property type="match status" value="1"/>
</dbReference>
<dbReference type="HAMAP" id="MF_00013">
    <property type="entry name" value="LipB"/>
    <property type="match status" value="1"/>
</dbReference>
<dbReference type="InterPro" id="IPR045864">
    <property type="entry name" value="aa-tRNA-synth_II/BPL/LPL"/>
</dbReference>
<dbReference type="InterPro" id="IPR004143">
    <property type="entry name" value="BPL_LPL_catalytic"/>
</dbReference>
<dbReference type="InterPro" id="IPR000544">
    <property type="entry name" value="Octanoyltransferase"/>
</dbReference>
<dbReference type="InterPro" id="IPR020605">
    <property type="entry name" value="Octanoyltransferase_CS"/>
</dbReference>
<dbReference type="NCBIfam" id="TIGR00214">
    <property type="entry name" value="lipB"/>
    <property type="match status" value="1"/>
</dbReference>
<dbReference type="NCBIfam" id="NF010925">
    <property type="entry name" value="PRK14345.1"/>
    <property type="match status" value="1"/>
</dbReference>
<dbReference type="PANTHER" id="PTHR10993:SF7">
    <property type="entry name" value="LIPOYLTRANSFERASE 2, MITOCHONDRIAL-RELATED"/>
    <property type="match status" value="1"/>
</dbReference>
<dbReference type="PANTHER" id="PTHR10993">
    <property type="entry name" value="OCTANOYLTRANSFERASE"/>
    <property type="match status" value="1"/>
</dbReference>
<dbReference type="Pfam" id="PF21948">
    <property type="entry name" value="LplA-B_cat"/>
    <property type="match status" value="1"/>
</dbReference>
<dbReference type="PIRSF" id="PIRSF016262">
    <property type="entry name" value="LPLase"/>
    <property type="match status" value="1"/>
</dbReference>
<dbReference type="SUPFAM" id="SSF55681">
    <property type="entry name" value="Class II aaRS and biotin synthetases"/>
    <property type="match status" value="1"/>
</dbReference>
<dbReference type="PROSITE" id="PS51733">
    <property type="entry name" value="BPL_LPL_CATALYTIC"/>
    <property type="match status" value="1"/>
</dbReference>
<dbReference type="PROSITE" id="PS01313">
    <property type="entry name" value="LIPB"/>
    <property type="match status" value="1"/>
</dbReference>
<feature type="chain" id="PRO_0000062808" description="Octanoyltransferase">
    <location>
        <begin position="1"/>
        <end position="221"/>
    </location>
</feature>
<feature type="domain" description="BPL/LPL catalytic" evidence="2">
    <location>
        <begin position="40"/>
        <end position="218"/>
    </location>
</feature>
<feature type="active site" description="Acyl-thioester intermediate" evidence="1">
    <location>
        <position position="180"/>
    </location>
</feature>
<feature type="binding site" evidence="1">
    <location>
        <begin position="82"/>
        <end position="89"/>
    </location>
    <ligand>
        <name>substrate</name>
    </ligand>
</feature>
<feature type="binding site" evidence="1">
    <location>
        <begin position="149"/>
        <end position="151"/>
    </location>
    <ligand>
        <name>substrate</name>
    </ligand>
</feature>
<feature type="binding site" evidence="1">
    <location>
        <begin position="162"/>
        <end position="164"/>
    </location>
    <ligand>
        <name>substrate</name>
    </ligand>
</feature>
<feature type="site" description="Lowers pKa of active site Cys" evidence="1">
    <location>
        <position position="146"/>
    </location>
</feature>
<protein>
    <recommendedName>
        <fullName evidence="1">Octanoyltransferase</fullName>
        <ecNumber evidence="1">2.3.1.181</ecNumber>
    </recommendedName>
    <alternativeName>
        <fullName evidence="1">Lipoate-protein ligase B</fullName>
    </alternativeName>
    <alternativeName>
        <fullName evidence="1">Lipoyl/octanoyl transferase</fullName>
    </alternativeName>
    <alternativeName>
        <fullName evidence="1">Octanoyl-[acyl-carrier-protein]-protein N-octanoyltransferase</fullName>
    </alternativeName>
</protein>
<reference key="1">
    <citation type="journal article" date="2001" name="DNA Res.">
        <title>Complete genomic sequence of the filamentous nitrogen-fixing cyanobacterium Anabaena sp. strain PCC 7120.</title>
        <authorList>
            <person name="Kaneko T."/>
            <person name="Nakamura Y."/>
            <person name="Wolk C.P."/>
            <person name="Kuritz T."/>
            <person name="Sasamoto S."/>
            <person name="Watanabe A."/>
            <person name="Iriguchi M."/>
            <person name="Ishikawa A."/>
            <person name="Kawashima K."/>
            <person name="Kimura T."/>
            <person name="Kishida Y."/>
            <person name="Kohara M."/>
            <person name="Matsumoto M."/>
            <person name="Matsuno A."/>
            <person name="Muraki A."/>
            <person name="Nakazaki N."/>
            <person name="Shimpo S."/>
            <person name="Sugimoto M."/>
            <person name="Takazawa M."/>
            <person name="Yamada M."/>
            <person name="Yasuda M."/>
            <person name="Tabata S."/>
        </authorList>
    </citation>
    <scope>NUCLEOTIDE SEQUENCE [LARGE SCALE GENOMIC DNA]</scope>
    <source>
        <strain>PCC 7120 / SAG 25.82 / UTEX 2576</strain>
    </source>
</reference>
<gene>
    <name evidence="1" type="primary">lipB</name>
    <name type="ordered locus">alr3185</name>
</gene>
<sequence>MIRSNKPPENNCLLYNKGLMPYLAAHAWQRSLLRQRIDYPNLEDVLILLEHPPVYTLGQGSSLEFLKFDPNQSEFEIHRIERGGEVTYHCPGQLVGYPILNLHRHRQDLHWYLRQLEEVIIRVLAVYDLKGDRLPSLTGVWLEGRKVAAIGIKVSRWITMHGFALNVCPDMTGFSRIVPCGITDKPVGSLAQWIPGITCEEVRVHVVQAFAEVFGLELVDS</sequence>
<comment type="function">
    <text evidence="1">Catalyzes the transfer of endogenously produced octanoic acid from octanoyl-acyl-carrier-protein onto the lipoyl domains of lipoate-dependent enzymes. Lipoyl-ACP can also act as a substrate although octanoyl-ACP is likely to be the physiological substrate.</text>
</comment>
<comment type="catalytic activity">
    <reaction evidence="1">
        <text>octanoyl-[ACP] + L-lysyl-[protein] = N(6)-octanoyl-L-lysyl-[protein] + holo-[ACP] + H(+)</text>
        <dbReference type="Rhea" id="RHEA:17665"/>
        <dbReference type="Rhea" id="RHEA-COMP:9636"/>
        <dbReference type="Rhea" id="RHEA-COMP:9685"/>
        <dbReference type="Rhea" id="RHEA-COMP:9752"/>
        <dbReference type="Rhea" id="RHEA-COMP:9928"/>
        <dbReference type="ChEBI" id="CHEBI:15378"/>
        <dbReference type="ChEBI" id="CHEBI:29969"/>
        <dbReference type="ChEBI" id="CHEBI:64479"/>
        <dbReference type="ChEBI" id="CHEBI:78463"/>
        <dbReference type="ChEBI" id="CHEBI:78809"/>
        <dbReference type="EC" id="2.3.1.181"/>
    </reaction>
</comment>
<comment type="pathway">
    <text evidence="1">Protein modification; protein lipoylation via endogenous pathway; protein N(6)-(lipoyl)lysine from octanoyl-[acyl-carrier-protein]: step 1/2.</text>
</comment>
<comment type="subcellular location">
    <subcellularLocation>
        <location evidence="1">Cytoplasm</location>
    </subcellularLocation>
</comment>
<comment type="miscellaneous">
    <text evidence="1">In the reaction, the free carboxyl group of octanoic acid is attached via an amide linkage to the epsilon-amino group of a specific lysine residue of lipoyl domains of lipoate-dependent enzymes.</text>
</comment>
<comment type="similarity">
    <text evidence="1">Belongs to the LipB family.</text>
</comment>
<keyword id="KW-0012">Acyltransferase</keyword>
<keyword id="KW-0963">Cytoplasm</keyword>
<keyword id="KW-1185">Reference proteome</keyword>
<keyword id="KW-0808">Transferase</keyword>
<accession>Q8YSA4</accession>
<name>LIPB_NOSS1</name>
<proteinExistence type="inferred from homology"/>
<evidence type="ECO:0000255" key="1">
    <source>
        <dbReference type="HAMAP-Rule" id="MF_00013"/>
    </source>
</evidence>
<evidence type="ECO:0000255" key="2">
    <source>
        <dbReference type="PROSITE-ProRule" id="PRU01067"/>
    </source>
</evidence>
<organism>
    <name type="scientific">Nostoc sp. (strain PCC 7120 / SAG 25.82 / UTEX 2576)</name>
    <dbReference type="NCBI Taxonomy" id="103690"/>
    <lineage>
        <taxon>Bacteria</taxon>
        <taxon>Bacillati</taxon>
        <taxon>Cyanobacteriota</taxon>
        <taxon>Cyanophyceae</taxon>
        <taxon>Nostocales</taxon>
        <taxon>Nostocaceae</taxon>
        <taxon>Nostoc</taxon>
    </lineage>
</organism>